<gene>
    <name type="ordered locus">BUsg_450</name>
</gene>
<evidence type="ECO:0000255" key="1"/>
<evidence type="ECO:0000305" key="2"/>
<keyword id="KW-1003">Cell membrane</keyword>
<keyword id="KW-0472">Membrane</keyword>
<keyword id="KW-0812">Transmembrane</keyword>
<keyword id="KW-1133">Transmembrane helix</keyword>
<keyword id="KW-0813">Transport</keyword>
<name>Y450_BUCAP</name>
<dbReference type="EMBL" id="AE013218">
    <property type="protein sequence ID" value="AAM67993.1"/>
    <property type="molecule type" value="Genomic_DNA"/>
</dbReference>
<dbReference type="SMR" id="Q8K999"/>
<dbReference type="STRING" id="198804.BUsg_450"/>
<dbReference type="KEGG" id="bas:BUsg_450"/>
<dbReference type="eggNOG" id="COG2814">
    <property type="taxonomic scope" value="Bacteria"/>
</dbReference>
<dbReference type="HOGENOM" id="CLU_001265_10_0_6"/>
<dbReference type="Proteomes" id="UP000000416">
    <property type="component" value="Chromosome"/>
</dbReference>
<dbReference type="GO" id="GO:0005886">
    <property type="term" value="C:plasma membrane"/>
    <property type="evidence" value="ECO:0007669"/>
    <property type="project" value="UniProtKB-SubCell"/>
</dbReference>
<dbReference type="GO" id="GO:0022857">
    <property type="term" value="F:transmembrane transporter activity"/>
    <property type="evidence" value="ECO:0007669"/>
    <property type="project" value="InterPro"/>
</dbReference>
<dbReference type="Gene3D" id="1.20.1250.20">
    <property type="entry name" value="MFS general substrate transporter like domains"/>
    <property type="match status" value="1"/>
</dbReference>
<dbReference type="InterPro" id="IPR011701">
    <property type="entry name" value="MFS"/>
</dbReference>
<dbReference type="InterPro" id="IPR020846">
    <property type="entry name" value="MFS_dom"/>
</dbReference>
<dbReference type="InterPro" id="IPR036259">
    <property type="entry name" value="MFS_trans_sf"/>
</dbReference>
<dbReference type="InterPro" id="IPR050171">
    <property type="entry name" value="MFS_Transporters"/>
</dbReference>
<dbReference type="PANTHER" id="PTHR23517:SF2">
    <property type="entry name" value="MULTIDRUG RESISTANCE PROTEIN MDTH"/>
    <property type="match status" value="1"/>
</dbReference>
<dbReference type="PANTHER" id="PTHR23517">
    <property type="entry name" value="RESISTANCE PROTEIN MDTM, PUTATIVE-RELATED-RELATED"/>
    <property type="match status" value="1"/>
</dbReference>
<dbReference type="Pfam" id="PF07690">
    <property type="entry name" value="MFS_1"/>
    <property type="match status" value="1"/>
</dbReference>
<dbReference type="SUPFAM" id="SSF103473">
    <property type="entry name" value="MFS general substrate transporter"/>
    <property type="match status" value="1"/>
</dbReference>
<dbReference type="PROSITE" id="PS50850">
    <property type="entry name" value="MFS"/>
    <property type="match status" value="1"/>
</dbReference>
<protein>
    <recommendedName>
        <fullName>Uncharacterized transporter BUsg_450</fullName>
    </recommendedName>
</protein>
<proteinExistence type="inferred from homology"/>
<reference key="1">
    <citation type="journal article" date="2002" name="Science">
        <title>50 million years of genomic stasis in endosymbiotic bacteria.</title>
        <authorList>
            <person name="Tamas I."/>
            <person name="Klasson L."/>
            <person name="Canbaeck B."/>
            <person name="Naeslund A.K."/>
            <person name="Eriksson A.-S."/>
            <person name="Wernegreen J.J."/>
            <person name="Sandstroem J.P."/>
            <person name="Moran N.A."/>
            <person name="Andersson S.G.E."/>
        </authorList>
    </citation>
    <scope>NUCLEOTIDE SEQUENCE [LARGE SCALE GENOMIC DNA]</scope>
    <source>
        <strain>Sg</strain>
    </source>
</reference>
<accession>Q8K999</accession>
<sequence length="391" mass="45072">MKNYKMNFIELQVTLSFCVVFLLRMLGIFSVLPILSKYGLYLNGGNKFLIGLAVGIYGATQIVFQIPFGILSDRFGRKQIIIFGLFIFFIGSLIVVSTNSIFGLIIGRAIQGSGAISGVSMALLSDLIRKENRIKSISIIGVSFAVSFLISVVSAPIIAENFGFFSIFWISAVFSIFSILIVFFLIPSSQNEILKNYKKNIYQKKIKFIFNKIFFRFYLGVFLLHFLLTMNFLIIPYEFELSGLALHYHWIVYFATIVFSFFFLFLIVFYFKFHFFLKNIIEICIFFIFLSLLLFLLSQHNLICLTFALQIFFIAFNILEIFFPSHLSQEISINYYKGSIMSIYSTSQFLGIACGGVLNGLLCTFFNTNHIFLFEIFITLIWFIFSFFCKK</sequence>
<comment type="subcellular location">
    <subcellularLocation>
        <location evidence="2">Cell membrane</location>
        <topology evidence="2">Multi-pass membrane protein</topology>
    </subcellularLocation>
</comment>
<comment type="similarity">
    <text evidence="2">Belongs to the major facilitator superfamily.</text>
</comment>
<organism>
    <name type="scientific">Buchnera aphidicola subsp. Schizaphis graminum (strain Sg)</name>
    <dbReference type="NCBI Taxonomy" id="198804"/>
    <lineage>
        <taxon>Bacteria</taxon>
        <taxon>Pseudomonadati</taxon>
        <taxon>Pseudomonadota</taxon>
        <taxon>Gammaproteobacteria</taxon>
        <taxon>Enterobacterales</taxon>
        <taxon>Erwiniaceae</taxon>
        <taxon>Buchnera</taxon>
    </lineage>
</organism>
<feature type="chain" id="PRO_0000173413" description="Uncharacterized transporter BUsg_450">
    <location>
        <begin position="1"/>
        <end position="391"/>
    </location>
</feature>
<feature type="transmembrane region" description="Helical" evidence="1">
    <location>
        <begin position="15"/>
        <end position="35"/>
    </location>
</feature>
<feature type="transmembrane region" description="Helical" evidence="1">
    <location>
        <begin position="48"/>
        <end position="68"/>
    </location>
</feature>
<feature type="transmembrane region" description="Helical" evidence="1">
    <location>
        <begin position="81"/>
        <end position="101"/>
    </location>
</feature>
<feature type="transmembrane region" description="Helical" evidence="1">
    <location>
        <begin position="139"/>
        <end position="159"/>
    </location>
</feature>
<feature type="transmembrane region" description="Helical" evidence="1">
    <location>
        <begin position="167"/>
        <end position="187"/>
    </location>
</feature>
<feature type="transmembrane region" description="Helical" evidence="1">
    <location>
        <begin position="217"/>
        <end position="237"/>
    </location>
</feature>
<feature type="transmembrane region" description="Helical" evidence="1">
    <location>
        <begin position="251"/>
        <end position="271"/>
    </location>
</feature>
<feature type="transmembrane region" description="Helical" evidence="1">
    <location>
        <begin position="275"/>
        <end position="295"/>
    </location>
</feature>
<feature type="transmembrane region" description="Helical" evidence="1">
    <location>
        <begin position="303"/>
        <end position="323"/>
    </location>
</feature>
<feature type="transmembrane region" description="Helical" evidence="1">
    <location>
        <begin position="346"/>
        <end position="366"/>
    </location>
</feature>
<feature type="transmembrane region" description="Helical" evidence="1">
    <location>
        <begin position="369"/>
        <end position="389"/>
    </location>
</feature>